<reference key="1">
    <citation type="journal article" date="2005" name="Nucleic Acids Res.">
        <title>Genome dynamics and diversity of Shigella species, the etiologic agents of bacillary dysentery.</title>
        <authorList>
            <person name="Yang F."/>
            <person name="Yang J."/>
            <person name="Zhang X."/>
            <person name="Chen L."/>
            <person name="Jiang Y."/>
            <person name="Yan Y."/>
            <person name="Tang X."/>
            <person name="Wang J."/>
            <person name="Xiong Z."/>
            <person name="Dong J."/>
            <person name="Xue Y."/>
            <person name="Zhu Y."/>
            <person name="Xu X."/>
            <person name="Sun L."/>
            <person name="Chen S."/>
            <person name="Nie H."/>
            <person name="Peng J."/>
            <person name="Xu J."/>
            <person name="Wang Y."/>
            <person name="Yuan Z."/>
            <person name="Wen Y."/>
            <person name="Yao Z."/>
            <person name="Shen Y."/>
            <person name="Qiang B."/>
            <person name="Hou Y."/>
            <person name="Yu J."/>
            <person name="Jin Q."/>
        </authorList>
    </citation>
    <scope>NUCLEOTIDE SEQUENCE [LARGE SCALE GENOMIC DNA]</scope>
    <source>
        <strain>Sd197</strain>
    </source>
</reference>
<organism>
    <name type="scientific">Shigella dysenteriae serotype 1 (strain Sd197)</name>
    <dbReference type="NCBI Taxonomy" id="300267"/>
    <lineage>
        <taxon>Bacteria</taxon>
        <taxon>Pseudomonadati</taxon>
        <taxon>Pseudomonadota</taxon>
        <taxon>Gammaproteobacteria</taxon>
        <taxon>Enterobacterales</taxon>
        <taxon>Enterobacteriaceae</taxon>
        <taxon>Shigella</taxon>
    </lineage>
</organism>
<protein>
    <recommendedName>
        <fullName evidence="1">Protein translocase subunit SecA</fullName>
        <ecNumber evidence="1">7.4.2.8</ecNumber>
    </recommendedName>
</protein>
<name>SECA_SHIDS</name>
<gene>
    <name evidence="1" type="primary">secA</name>
    <name type="ordered locus">SDY_0128</name>
</gene>
<keyword id="KW-0067">ATP-binding</keyword>
<keyword id="KW-0997">Cell inner membrane</keyword>
<keyword id="KW-1003">Cell membrane</keyword>
<keyword id="KW-0963">Cytoplasm</keyword>
<keyword id="KW-0472">Membrane</keyword>
<keyword id="KW-0479">Metal-binding</keyword>
<keyword id="KW-0547">Nucleotide-binding</keyword>
<keyword id="KW-0653">Protein transport</keyword>
<keyword id="KW-1185">Reference proteome</keyword>
<keyword id="KW-1278">Translocase</keyword>
<keyword id="KW-0811">Translocation</keyword>
<keyword id="KW-0813">Transport</keyword>
<keyword id="KW-0862">Zinc</keyword>
<feature type="chain" id="PRO_0000321002" description="Protein translocase subunit SecA">
    <location>
        <begin position="1"/>
        <end position="901"/>
    </location>
</feature>
<feature type="region of interest" description="Disordered" evidence="2">
    <location>
        <begin position="859"/>
        <end position="901"/>
    </location>
</feature>
<feature type="compositionally biased region" description="Basic residues" evidence="2">
    <location>
        <begin position="891"/>
        <end position="901"/>
    </location>
</feature>
<feature type="binding site" evidence="1">
    <location>
        <position position="87"/>
    </location>
    <ligand>
        <name>ATP</name>
        <dbReference type="ChEBI" id="CHEBI:30616"/>
    </ligand>
</feature>
<feature type="binding site" evidence="1">
    <location>
        <begin position="105"/>
        <end position="109"/>
    </location>
    <ligand>
        <name>ATP</name>
        <dbReference type="ChEBI" id="CHEBI:30616"/>
    </ligand>
</feature>
<feature type="binding site" evidence="1">
    <location>
        <position position="512"/>
    </location>
    <ligand>
        <name>ATP</name>
        <dbReference type="ChEBI" id="CHEBI:30616"/>
    </ligand>
</feature>
<feature type="binding site" evidence="1">
    <location>
        <position position="885"/>
    </location>
    <ligand>
        <name>Zn(2+)</name>
        <dbReference type="ChEBI" id="CHEBI:29105"/>
    </ligand>
</feature>
<feature type="binding site" evidence="1">
    <location>
        <position position="887"/>
    </location>
    <ligand>
        <name>Zn(2+)</name>
        <dbReference type="ChEBI" id="CHEBI:29105"/>
    </ligand>
</feature>
<feature type="binding site" evidence="1">
    <location>
        <position position="896"/>
    </location>
    <ligand>
        <name>Zn(2+)</name>
        <dbReference type="ChEBI" id="CHEBI:29105"/>
    </ligand>
</feature>
<feature type="binding site" evidence="1">
    <location>
        <position position="897"/>
    </location>
    <ligand>
        <name>Zn(2+)</name>
        <dbReference type="ChEBI" id="CHEBI:29105"/>
    </ligand>
</feature>
<comment type="function">
    <text evidence="1">Part of the Sec protein translocase complex. Interacts with the SecYEG preprotein conducting channel. Has a central role in coupling the hydrolysis of ATP to the transfer of proteins into and across the cell membrane, serving both as a receptor for the preprotein-SecB complex and as an ATP-driven molecular motor driving the stepwise translocation of polypeptide chains across the membrane.</text>
</comment>
<comment type="catalytic activity">
    <reaction evidence="1">
        <text>ATP + H2O + cellular proteinSide 1 = ADP + phosphate + cellular proteinSide 2.</text>
        <dbReference type="EC" id="7.4.2.8"/>
    </reaction>
</comment>
<comment type="cofactor">
    <cofactor evidence="1">
        <name>Zn(2+)</name>
        <dbReference type="ChEBI" id="CHEBI:29105"/>
    </cofactor>
    <text evidence="1">May bind 1 zinc ion per subunit.</text>
</comment>
<comment type="subunit">
    <text evidence="1">Monomer and homodimer. Part of the essential Sec protein translocation apparatus which comprises SecA, SecYEG and auxiliary proteins SecDF-YajC and YidC.</text>
</comment>
<comment type="subcellular location">
    <subcellularLocation>
        <location evidence="1">Cell inner membrane</location>
        <topology evidence="1">Peripheral membrane protein</topology>
        <orientation evidence="1">Cytoplasmic side</orientation>
    </subcellularLocation>
    <subcellularLocation>
        <location evidence="1">Cytoplasm</location>
    </subcellularLocation>
    <text evidence="1">Distribution is 50-50.</text>
</comment>
<comment type="induction">
    <text evidence="1">Repressed under conditions of excess protein secretion capacity and derepressed when protein secretion becomes limiting. This is regulated by SecM.</text>
</comment>
<comment type="similarity">
    <text evidence="1">Belongs to the SecA family.</text>
</comment>
<dbReference type="EC" id="7.4.2.8" evidence="1"/>
<dbReference type="EMBL" id="CP000034">
    <property type="protein sequence ID" value="ABB60363.1"/>
    <property type="molecule type" value="Genomic_DNA"/>
</dbReference>
<dbReference type="RefSeq" id="WP_000905800.1">
    <property type="nucleotide sequence ID" value="NC_007606.1"/>
</dbReference>
<dbReference type="RefSeq" id="YP_401852.1">
    <property type="nucleotide sequence ID" value="NC_007606.1"/>
</dbReference>
<dbReference type="SMR" id="Q32JZ4"/>
<dbReference type="STRING" id="300267.SDY_0128"/>
<dbReference type="EnsemblBacteria" id="ABB60363">
    <property type="protein sequence ID" value="ABB60363"/>
    <property type="gene ID" value="SDY_0128"/>
</dbReference>
<dbReference type="KEGG" id="sdy:SDY_0128"/>
<dbReference type="PATRIC" id="fig|300267.13.peg.147"/>
<dbReference type="HOGENOM" id="CLU_005314_3_0_6"/>
<dbReference type="Proteomes" id="UP000002716">
    <property type="component" value="Chromosome"/>
</dbReference>
<dbReference type="GO" id="GO:0031522">
    <property type="term" value="C:cell envelope Sec protein transport complex"/>
    <property type="evidence" value="ECO:0007669"/>
    <property type="project" value="TreeGrafter"/>
</dbReference>
<dbReference type="GO" id="GO:0005829">
    <property type="term" value="C:cytosol"/>
    <property type="evidence" value="ECO:0007669"/>
    <property type="project" value="TreeGrafter"/>
</dbReference>
<dbReference type="GO" id="GO:0005886">
    <property type="term" value="C:plasma membrane"/>
    <property type="evidence" value="ECO:0007669"/>
    <property type="project" value="UniProtKB-SubCell"/>
</dbReference>
<dbReference type="GO" id="GO:0005524">
    <property type="term" value="F:ATP binding"/>
    <property type="evidence" value="ECO:0007669"/>
    <property type="project" value="UniProtKB-UniRule"/>
</dbReference>
<dbReference type="GO" id="GO:0046872">
    <property type="term" value="F:metal ion binding"/>
    <property type="evidence" value="ECO:0007669"/>
    <property type="project" value="UniProtKB-KW"/>
</dbReference>
<dbReference type="GO" id="GO:0008564">
    <property type="term" value="F:protein-exporting ATPase activity"/>
    <property type="evidence" value="ECO:0007669"/>
    <property type="project" value="UniProtKB-EC"/>
</dbReference>
<dbReference type="GO" id="GO:0065002">
    <property type="term" value="P:intracellular protein transmembrane transport"/>
    <property type="evidence" value="ECO:0007669"/>
    <property type="project" value="UniProtKB-UniRule"/>
</dbReference>
<dbReference type="GO" id="GO:0017038">
    <property type="term" value="P:protein import"/>
    <property type="evidence" value="ECO:0007669"/>
    <property type="project" value="InterPro"/>
</dbReference>
<dbReference type="GO" id="GO:0006605">
    <property type="term" value="P:protein targeting"/>
    <property type="evidence" value="ECO:0007669"/>
    <property type="project" value="UniProtKB-UniRule"/>
</dbReference>
<dbReference type="GO" id="GO:0043952">
    <property type="term" value="P:protein transport by the Sec complex"/>
    <property type="evidence" value="ECO:0007669"/>
    <property type="project" value="TreeGrafter"/>
</dbReference>
<dbReference type="CDD" id="cd17928">
    <property type="entry name" value="DEXDc_SecA"/>
    <property type="match status" value="1"/>
</dbReference>
<dbReference type="CDD" id="cd18803">
    <property type="entry name" value="SF2_C_secA"/>
    <property type="match status" value="1"/>
</dbReference>
<dbReference type="FunFam" id="1.10.3060.10:FF:000001">
    <property type="entry name" value="Preprotein translocase subunit SecA"/>
    <property type="match status" value="1"/>
</dbReference>
<dbReference type="FunFam" id="3.40.50.300:FF:000081">
    <property type="entry name" value="Preprotein translocase subunit SecA"/>
    <property type="match status" value="1"/>
</dbReference>
<dbReference type="FunFam" id="3.40.50.300:FF:000113">
    <property type="entry name" value="Preprotein translocase subunit SecA"/>
    <property type="match status" value="1"/>
</dbReference>
<dbReference type="FunFam" id="3.90.1440.10:FF:000001">
    <property type="entry name" value="Preprotein translocase subunit SecA"/>
    <property type="match status" value="1"/>
</dbReference>
<dbReference type="Gene3D" id="1.10.3060.10">
    <property type="entry name" value="Helical scaffold and wing domains of SecA"/>
    <property type="match status" value="1"/>
</dbReference>
<dbReference type="Gene3D" id="3.40.50.300">
    <property type="entry name" value="P-loop containing nucleotide triphosphate hydrolases"/>
    <property type="match status" value="2"/>
</dbReference>
<dbReference type="Gene3D" id="3.90.1440.10">
    <property type="entry name" value="SecA, preprotein cross-linking domain"/>
    <property type="match status" value="1"/>
</dbReference>
<dbReference type="HAMAP" id="MF_01382">
    <property type="entry name" value="SecA"/>
    <property type="match status" value="1"/>
</dbReference>
<dbReference type="InterPro" id="IPR014001">
    <property type="entry name" value="Helicase_ATP-bd"/>
</dbReference>
<dbReference type="InterPro" id="IPR027417">
    <property type="entry name" value="P-loop_NTPase"/>
</dbReference>
<dbReference type="InterPro" id="IPR004027">
    <property type="entry name" value="SEC_C_motif"/>
</dbReference>
<dbReference type="InterPro" id="IPR000185">
    <property type="entry name" value="SecA"/>
</dbReference>
<dbReference type="InterPro" id="IPR020937">
    <property type="entry name" value="SecA_CS"/>
</dbReference>
<dbReference type="InterPro" id="IPR011115">
    <property type="entry name" value="SecA_DEAD"/>
</dbReference>
<dbReference type="InterPro" id="IPR014018">
    <property type="entry name" value="SecA_motor_DEAD"/>
</dbReference>
<dbReference type="InterPro" id="IPR011130">
    <property type="entry name" value="SecA_preprotein_X-link_dom"/>
</dbReference>
<dbReference type="InterPro" id="IPR044722">
    <property type="entry name" value="SecA_SF2_C"/>
</dbReference>
<dbReference type="InterPro" id="IPR011116">
    <property type="entry name" value="SecA_Wing/Scaffold"/>
</dbReference>
<dbReference type="InterPro" id="IPR036266">
    <property type="entry name" value="SecA_Wing/Scaffold_sf"/>
</dbReference>
<dbReference type="InterPro" id="IPR036670">
    <property type="entry name" value="SecA_X-link_sf"/>
</dbReference>
<dbReference type="NCBIfam" id="NF009538">
    <property type="entry name" value="PRK12904.1"/>
    <property type="match status" value="1"/>
</dbReference>
<dbReference type="NCBIfam" id="TIGR00963">
    <property type="entry name" value="secA"/>
    <property type="match status" value="1"/>
</dbReference>
<dbReference type="PANTHER" id="PTHR30612:SF0">
    <property type="entry name" value="CHLOROPLAST PROTEIN-TRANSPORTING ATPASE"/>
    <property type="match status" value="1"/>
</dbReference>
<dbReference type="PANTHER" id="PTHR30612">
    <property type="entry name" value="SECA INNER MEMBRANE COMPONENT OF SEC PROTEIN SECRETION SYSTEM"/>
    <property type="match status" value="1"/>
</dbReference>
<dbReference type="Pfam" id="PF21090">
    <property type="entry name" value="P-loop_SecA"/>
    <property type="match status" value="1"/>
</dbReference>
<dbReference type="Pfam" id="PF02810">
    <property type="entry name" value="SEC-C"/>
    <property type="match status" value="1"/>
</dbReference>
<dbReference type="Pfam" id="PF07517">
    <property type="entry name" value="SecA_DEAD"/>
    <property type="match status" value="1"/>
</dbReference>
<dbReference type="Pfam" id="PF01043">
    <property type="entry name" value="SecA_PP_bind"/>
    <property type="match status" value="1"/>
</dbReference>
<dbReference type="Pfam" id="PF07516">
    <property type="entry name" value="SecA_SW"/>
    <property type="match status" value="1"/>
</dbReference>
<dbReference type="PRINTS" id="PR00906">
    <property type="entry name" value="SECA"/>
</dbReference>
<dbReference type="SMART" id="SM00957">
    <property type="entry name" value="SecA_DEAD"/>
    <property type="match status" value="1"/>
</dbReference>
<dbReference type="SMART" id="SM00958">
    <property type="entry name" value="SecA_PP_bind"/>
    <property type="match status" value="1"/>
</dbReference>
<dbReference type="SUPFAM" id="SSF81886">
    <property type="entry name" value="Helical scaffold and wing domains of SecA"/>
    <property type="match status" value="1"/>
</dbReference>
<dbReference type="SUPFAM" id="SSF52540">
    <property type="entry name" value="P-loop containing nucleoside triphosphate hydrolases"/>
    <property type="match status" value="2"/>
</dbReference>
<dbReference type="SUPFAM" id="SSF81767">
    <property type="entry name" value="Pre-protein crosslinking domain of SecA"/>
    <property type="match status" value="1"/>
</dbReference>
<dbReference type="PROSITE" id="PS01312">
    <property type="entry name" value="SECA"/>
    <property type="match status" value="1"/>
</dbReference>
<dbReference type="PROSITE" id="PS51196">
    <property type="entry name" value="SECA_MOTOR_DEAD"/>
    <property type="match status" value="1"/>
</dbReference>
<accession>Q32JZ4</accession>
<proteinExistence type="inferred from homology"/>
<evidence type="ECO:0000255" key="1">
    <source>
        <dbReference type="HAMAP-Rule" id="MF_01382"/>
    </source>
</evidence>
<evidence type="ECO:0000256" key="2">
    <source>
        <dbReference type="SAM" id="MobiDB-lite"/>
    </source>
</evidence>
<sequence>MLIKLLTKVFGSRNDRTLRRMRKVVNIINAMEPEMEKLSDEELKGKTAEFRARLEKGEVLENLIPEAFAVVREASKRVFGMRHFDVQLLGGMVLNERCIAEMRTGEGKTLTATLPAYLNALTGKGVHVVTVNDYLAQRDAENNRPLFEFLGLTVGINLPGMPAPAKREAYAADITYGTNNEYGFDYLRDNMAFSPEERVQRKLHYALVDEVDSILIDEARTPLIISGPVEDSSEMYKRVNKIIPHLIRQEKEDSETFQGEGHFSVDEKSRQVNLTERGLVLIEELLVKEGIMDEGESLYSPANIMLMHHVTAALRAHALFTRDVDYIVKDGEVIIVDEHTGRTMQGRRWSDGLHQAVEAKEGVQIQNENQTLASITFQNYFRLYEKLAGMTGTADTEAFEFSSIYKLDTVVVPTNRPMIRKDLPDLVYMTEAEKIQAIIEDIKERTAKGQPVLVGTISIEKSELVSNELTKAGIKHNVLNAKFHANEAAIVAQAGYPAAVTIATNMAGRGTDIVLGGSWQAEVAALENPTAEQIEKIKADWQVRHDAVLAAGGLHIIGTERHESRRIDNQLRGRSGRQGDAGSSRFYLSMEDALMRIFAPDRVSGMMRKLGMKPGEAIEHPWVTKAIANAQRKVESRNFDIRKQLLEYDDVANDQRRAIYSQRNELLDVSDVSETINSIREDVFKATIDAYIPPQSLEEMWDIPGLQERLKNDFDLDLPIAEWLDKEPELHEETLRERILAQSIEVYQRKEEVVGAEMMRHFEKGVMLQTLDSLWKEHQAAMDYLRQGIHLRGYAQKDPKQEYKRESFSMFAAMLESLKYEVISTLSKVQVRMPEEVEELEQQRRMEAERLAQMQQLSHQDDDSAAAAALAAQTGERKVGRNDPCPCGSGKKYKQCHGRLQ</sequence>